<proteinExistence type="inferred from homology"/>
<name>MTNC_ENT38</name>
<feature type="chain" id="PRO_0000357363" description="Enolase-phosphatase E1">
    <location>
        <begin position="1"/>
        <end position="229"/>
    </location>
</feature>
<evidence type="ECO:0000255" key="1">
    <source>
        <dbReference type="HAMAP-Rule" id="MF_01681"/>
    </source>
</evidence>
<dbReference type="EC" id="3.1.3.77" evidence="1"/>
<dbReference type="EMBL" id="CP000653">
    <property type="protein sequence ID" value="ABP59823.1"/>
    <property type="molecule type" value="Genomic_DNA"/>
</dbReference>
<dbReference type="RefSeq" id="WP_012016543.1">
    <property type="nucleotide sequence ID" value="NC_009436.1"/>
</dbReference>
<dbReference type="SMR" id="A4W7Z3"/>
<dbReference type="STRING" id="399742.Ent638_1142"/>
<dbReference type="KEGG" id="ent:Ent638_1142"/>
<dbReference type="eggNOG" id="COG4229">
    <property type="taxonomic scope" value="Bacteria"/>
</dbReference>
<dbReference type="HOGENOM" id="CLU_023273_0_0_6"/>
<dbReference type="OrthoDB" id="9797416at2"/>
<dbReference type="UniPathway" id="UPA00904">
    <property type="reaction ID" value="UER00876"/>
</dbReference>
<dbReference type="UniPathway" id="UPA00904">
    <property type="reaction ID" value="UER00877"/>
</dbReference>
<dbReference type="Proteomes" id="UP000000230">
    <property type="component" value="Chromosome"/>
</dbReference>
<dbReference type="GO" id="GO:0043715">
    <property type="term" value="F:2,3-diketo-5-methylthiopentyl-1-phosphate enolase activity"/>
    <property type="evidence" value="ECO:0007669"/>
    <property type="project" value="UniProtKB-UniRule"/>
</dbReference>
<dbReference type="GO" id="GO:0043716">
    <property type="term" value="F:2-hydroxy-3-keto-5-methylthiopentenyl-1-phosphate phosphatase activity"/>
    <property type="evidence" value="ECO:0007669"/>
    <property type="project" value="UniProtKB-UniRule"/>
</dbReference>
<dbReference type="GO" id="GO:0043874">
    <property type="term" value="F:acireductone synthase activity"/>
    <property type="evidence" value="ECO:0007669"/>
    <property type="project" value="UniProtKB-EC"/>
</dbReference>
<dbReference type="GO" id="GO:0000287">
    <property type="term" value="F:magnesium ion binding"/>
    <property type="evidence" value="ECO:0007669"/>
    <property type="project" value="UniProtKB-UniRule"/>
</dbReference>
<dbReference type="GO" id="GO:0019509">
    <property type="term" value="P:L-methionine salvage from methylthioadenosine"/>
    <property type="evidence" value="ECO:0007669"/>
    <property type="project" value="UniProtKB-UniRule"/>
</dbReference>
<dbReference type="CDD" id="cd01629">
    <property type="entry name" value="HAD_EP"/>
    <property type="match status" value="1"/>
</dbReference>
<dbReference type="FunFam" id="3.40.50.1000:FF:000079">
    <property type="entry name" value="Enolase-phosphatase E1"/>
    <property type="match status" value="1"/>
</dbReference>
<dbReference type="Gene3D" id="1.10.720.60">
    <property type="match status" value="1"/>
</dbReference>
<dbReference type="Gene3D" id="3.40.50.1000">
    <property type="entry name" value="HAD superfamily/HAD-like"/>
    <property type="match status" value="1"/>
</dbReference>
<dbReference type="HAMAP" id="MF_01681">
    <property type="entry name" value="Salvage_MtnC"/>
    <property type="match status" value="1"/>
</dbReference>
<dbReference type="InterPro" id="IPR023943">
    <property type="entry name" value="Enolase-ppase_E1"/>
</dbReference>
<dbReference type="InterPro" id="IPR036412">
    <property type="entry name" value="HAD-like_sf"/>
</dbReference>
<dbReference type="InterPro" id="IPR006439">
    <property type="entry name" value="HAD-SF_hydro_IA"/>
</dbReference>
<dbReference type="InterPro" id="IPR023214">
    <property type="entry name" value="HAD_sf"/>
</dbReference>
<dbReference type="NCBIfam" id="TIGR01691">
    <property type="entry name" value="enolase-ppase"/>
    <property type="match status" value="1"/>
</dbReference>
<dbReference type="NCBIfam" id="TIGR01549">
    <property type="entry name" value="HAD-SF-IA-v1"/>
    <property type="match status" value="1"/>
</dbReference>
<dbReference type="PANTHER" id="PTHR20371">
    <property type="entry name" value="ENOLASE-PHOSPHATASE E1"/>
    <property type="match status" value="1"/>
</dbReference>
<dbReference type="PANTHER" id="PTHR20371:SF1">
    <property type="entry name" value="ENOLASE-PHOSPHATASE E1"/>
    <property type="match status" value="1"/>
</dbReference>
<dbReference type="Pfam" id="PF00702">
    <property type="entry name" value="Hydrolase"/>
    <property type="match status" value="1"/>
</dbReference>
<dbReference type="PRINTS" id="PR00413">
    <property type="entry name" value="HADHALOGNASE"/>
</dbReference>
<dbReference type="SFLD" id="SFLDG01133">
    <property type="entry name" value="C1.5.4:_Enolase-phosphatase_Li"/>
    <property type="match status" value="1"/>
</dbReference>
<dbReference type="SFLD" id="SFLDF00044">
    <property type="entry name" value="enolase-phosphatase"/>
    <property type="match status" value="1"/>
</dbReference>
<dbReference type="SUPFAM" id="SSF56784">
    <property type="entry name" value="HAD-like"/>
    <property type="match status" value="1"/>
</dbReference>
<reference key="1">
    <citation type="journal article" date="2010" name="PLoS Genet.">
        <title>Genome sequence of the plant growth promoting endophytic bacterium Enterobacter sp. 638.</title>
        <authorList>
            <person name="Taghavi S."/>
            <person name="van der Lelie D."/>
            <person name="Hoffman A."/>
            <person name="Zhang Y.B."/>
            <person name="Walla M.D."/>
            <person name="Vangronsveld J."/>
            <person name="Newman L."/>
            <person name="Monchy S."/>
        </authorList>
    </citation>
    <scope>NUCLEOTIDE SEQUENCE [LARGE SCALE GENOMIC DNA]</scope>
    <source>
        <strain>638</strain>
    </source>
</reference>
<protein>
    <recommendedName>
        <fullName evidence="1">Enolase-phosphatase E1</fullName>
        <ecNumber evidence="1">3.1.3.77</ecNumber>
    </recommendedName>
    <alternativeName>
        <fullName evidence="1">2,3-diketo-5-methylthio-1-phosphopentane phosphatase</fullName>
    </alternativeName>
</protein>
<comment type="function">
    <text evidence="1">Bifunctional enzyme that catalyzes the enolization of 2,3-diketo-5-methylthiopentyl-1-phosphate (DK-MTP-1-P) into the intermediate 2-hydroxy-3-keto-5-methylthiopentenyl-1-phosphate (HK-MTPenyl-1-P), which is then dephosphorylated to form the acireductone 1,2-dihydroxy-3-keto-5-methylthiopentene (DHK-MTPene).</text>
</comment>
<comment type="catalytic activity">
    <reaction evidence="1">
        <text>5-methylsulfanyl-2,3-dioxopentyl phosphate + H2O = 1,2-dihydroxy-5-(methylsulfanyl)pent-1-en-3-one + phosphate</text>
        <dbReference type="Rhea" id="RHEA:21700"/>
        <dbReference type="ChEBI" id="CHEBI:15377"/>
        <dbReference type="ChEBI" id="CHEBI:43474"/>
        <dbReference type="ChEBI" id="CHEBI:49252"/>
        <dbReference type="ChEBI" id="CHEBI:58828"/>
        <dbReference type="EC" id="3.1.3.77"/>
    </reaction>
</comment>
<comment type="cofactor">
    <cofactor evidence="1">
        <name>Mg(2+)</name>
        <dbReference type="ChEBI" id="CHEBI:18420"/>
    </cofactor>
    <text evidence="1">Binds 1 Mg(2+) ion per subunit.</text>
</comment>
<comment type="pathway">
    <text evidence="1">Amino-acid biosynthesis; L-methionine biosynthesis via salvage pathway; L-methionine from S-methyl-5-thio-alpha-D-ribose 1-phosphate: step 3/6.</text>
</comment>
<comment type="pathway">
    <text evidence="1">Amino-acid biosynthesis; L-methionine biosynthesis via salvage pathway; L-methionine from S-methyl-5-thio-alpha-D-ribose 1-phosphate: step 4/6.</text>
</comment>
<comment type="subunit">
    <text evidence="1">Monomer.</text>
</comment>
<comment type="similarity">
    <text evidence="1">Belongs to the HAD-like hydrolase superfamily. MasA/MtnC family.</text>
</comment>
<gene>
    <name evidence="1" type="primary">mtnC</name>
    <name type="ordered locus">Ent638_1142</name>
</gene>
<sequence length="229" mass="25503">MIRAIVTDIEGTTSDIRFVHNVLFPYARERLAAFVTAQQYAEPVKSILDNLRDEIAAPHATIGELVDALFTFMDEDRKSTALKALQGIIWQDGYVNGDFTGQLYPDVLPALEKWKAQGIDLYVYSSGSVAAQKLLFGYSDEGDITHLFSGYFDTRVGAKRDVQSYQNIAAQIGVSPSQILFLSDIHEELDAAEQAGFRTLQLIRGDDDGASHHHQVHQFDEINPEQIPS</sequence>
<accession>A4W7Z3</accession>
<keyword id="KW-0028">Amino-acid biosynthesis</keyword>
<keyword id="KW-0378">Hydrolase</keyword>
<keyword id="KW-0460">Magnesium</keyword>
<keyword id="KW-0479">Metal-binding</keyword>
<keyword id="KW-0486">Methionine biosynthesis</keyword>
<organism>
    <name type="scientific">Enterobacter sp. (strain 638)</name>
    <dbReference type="NCBI Taxonomy" id="399742"/>
    <lineage>
        <taxon>Bacteria</taxon>
        <taxon>Pseudomonadati</taxon>
        <taxon>Pseudomonadota</taxon>
        <taxon>Gammaproteobacteria</taxon>
        <taxon>Enterobacterales</taxon>
        <taxon>Enterobacteriaceae</taxon>
        <taxon>Enterobacter</taxon>
    </lineage>
</organism>